<feature type="chain" id="PRO_0000225705" description="Large ribosomal subunit protein bL32">
    <location>
        <begin position="1"/>
        <end position="56"/>
    </location>
</feature>
<feature type="region of interest" description="Disordered" evidence="2">
    <location>
        <begin position="1"/>
        <end position="35"/>
    </location>
</feature>
<feature type="compositionally biased region" description="Basic residues" evidence="2">
    <location>
        <begin position="9"/>
        <end position="22"/>
    </location>
</feature>
<dbReference type="EMBL" id="CP000016">
    <property type="protein sequence ID" value="AAZ41044.1"/>
    <property type="molecule type" value="Genomic_DNA"/>
</dbReference>
<dbReference type="RefSeq" id="WP_011282953.1">
    <property type="nucleotide sequence ID" value="NC_007292.1"/>
</dbReference>
<dbReference type="SMR" id="Q492Q2"/>
<dbReference type="STRING" id="291272.BPEN_420"/>
<dbReference type="KEGG" id="bpn:BPEN_420"/>
<dbReference type="eggNOG" id="COG0333">
    <property type="taxonomic scope" value="Bacteria"/>
</dbReference>
<dbReference type="HOGENOM" id="CLU_129084_2_1_6"/>
<dbReference type="OrthoDB" id="9801927at2"/>
<dbReference type="Proteomes" id="UP000007794">
    <property type="component" value="Chromosome"/>
</dbReference>
<dbReference type="GO" id="GO:0015934">
    <property type="term" value="C:large ribosomal subunit"/>
    <property type="evidence" value="ECO:0007669"/>
    <property type="project" value="InterPro"/>
</dbReference>
<dbReference type="GO" id="GO:0003735">
    <property type="term" value="F:structural constituent of ribosome"/>
    <property type="evidence" value="ECO:0007669"/>
    <property type="project" value="InterPro"/>
</dbReference>
<dbReference type="GO" id="GO:0006412">
    <property type="term" value="P:translation"/>
    <property type="evidence" value="ECO:0007669"/>
    <property type="project" value="UniProtKB-UniRule"/>
</dbReference>
<dbReference type="HAMAP" id="MF_00340">
    <property type="entry name" value="Ribosomal_bL32"/>
    <property type="match status" value="1"/>
</dbReference>
<dbReference type="InterPro" id="IPR002677">
    <property type="entry name" value="Ribosomal_bL32"/>
</dbReference>
<dbReference type="InterPro" id="IPR044957">
    <property type="entry name" value="Ribosomal_bL32_bact"/>
</dbReference>
<dbReference type="InterPro" id="IPR011332">
    <property type="entry name" value="Ribosomal_zn-bd"/>
</dbReference>
<dbReference type="NCBIfam" id="TIGR01031">
    <property type="entry name" value="rpmF_bact"/>
    <property type="match status" value="1"/>
</dbReference>
<dbReference type="PANTHER" id="PTHR35534">
    <property type="entry name" value="50S RIBOSOMAL PROTEIN L32"/>
    <property type="match status" value="1"/>
</dbReference>
<dbReference type="PANTHER" id="PTHR35534:SF1">
    <property type="entry name" value="LARGE RIBOSOMAL SUBUNIT PROTEIN BL32"/>
    <property type="match status" value="1"/>
</dbReference>
<dbReference type="Pfam" id="PF01783">
    <property type="entry name" value="Ribosomal_L32p"/>
    <property type="match status" value="1"/>
</dbReference>
<dbReference type="SUPFAM" id="SSF57829">
    <property type="entry name" value="Zn-binding ribosomal proteins"/>
    <property type="match status" value="1"/>
</dbReference>
<name>RL32_BLOPB</name>
<comment type="similarity">
    <text evidence="1">Belongs to the bacterial ribosomal protein bL32 family.</text>
</comment>
<evidence type="ECO:0000255" key="1">
    <source>
        <dbReference type="HAMAP-Rule" id="MF_00340"/>
    </source>
</evidence>
<evidence type="ECO:0000256" key="2">
    <source>
        <dbReference type="SAM" id="MobiDB-lite"/>
    </source>
</evidence>
<evidence type="ECO:0000305" key="3"/>
<proteinExistence type="inferred from homology"/>
<organism>
    <name type="scientific">Blochmanniella pennsylvanica (strain BPEN)</name>
    <dbReference type="NCBI Taxonomy" id="291272"/>
    <lineage>
        <taxon>Bacteria</taxon>
        <taxon>Pseudomonadati</taxon>
        <taxon>Pseudomonadota</taxon>
        <taxon>Gammaproteobacteria</taxon>
        <taxon>Enterobacterales</taxon>
        <taxon>Enterobacteriaceae</taxon>
        <taxon>ant endosymbionts</taxon>
        <taxon>Candidatus Blochmanniella</taxon>
    </lineage>
</organism>
<accession>Q492Q2</accession>
<gene>
    <name evidence="1" type="primary">rpmF</name>
    <name type="ordered locus">BPEN_420</name>
</gene>
<reference key="1">
    <citation type="journal article" date="2005" name="Genome Res.">
        <title>Genome sequence of Blochmannia pennsylvanicus indicates parallel evolutionary trends among bacterial mutualists of insects.</title>
        <authorList>
            <person name="Degnan P.H."/>
            <person name="Lazarus A.B."/>
            <person name="Wernegreen J.J."/>
        </authorList>
    </citation>
    <scope>NUCLEOTIDE SEQUENCE [LARGE SCALE GENOMIC DNA]</scope>
    <source>
        <strain>BPEN</strain>
    </source>
</reference>
<keyword id="KW-1185">Reference proteome</keyword>
<keyword id="KW-0687">Ribonucleoprotein</keyword>
<keyword id="KW-0689">Ribosomal protein</keyword>
<protein>
    <recommendedName>
        <fullName evidence="1">Large ribosomal subunit protein bL32</fullName>
    </recommendedName>
    <alternativeName>
        <fullName evidence="3">50S ribosomal protein L32</fullName>
    </alternativeName>
</protein>
<sequence>MAVQQNKSTRSKRGMRRSHHALRSVTISVDRTSGETHRRHCVTFDGFYRGRKMIEK</sequence>